<gene>
    <name evidence="7" type="primary">Dusp13b</name>
    <name evidence="7" type="synonym">Dusp13</name>
    <name type="synonym">Gm1203</name>
    <name type="synonym">Tmdp</name>
</gene>
<feature type="chain" id="PRO_0000094821" description="Dual specificity protein phosphatase 13B">
    <location>
        <begin position="1"/>
        <end position="198"/>
    </location>
</feature>
<feature type="domain" description="Tyrosine-protein phosphatase" evidence="2">
    <location>
        <begin position="45"/>
        <end position="193"/>
    </location>
</feature>
<feature type="active site" description="Phosphocysteine intermediate" evidence="2">
    <location>
        <position position="138"/>
    </location>
</feature>
<reference key="1">
    <citation type="journal article" date="1999" name="Biochem. J.">
        <title>Molecular cloning and characterization of a novel dual-specificity protein phosphatase possibly involved in spermatogenesis.</title>
        <authorList>
            <person name="Nakamura K."/>
            <person name="Shima H."/>
            <person name="Watanabe M."/>
            <person name="Haneji T."/>
            <person name="Kikuchi K."/>
        </authorList>
    </citation>
    <scope>NUCLEOTIDE SEQUENCE [MRNA]</scope>
    <scope>FUNCTION</scope>
    <scope>CATALYTIC ACTIVITY</scope>
</reference>
<reference key="2">
    <citation type="journal article" date="2004" name="Genome Res.">
        <title>The status, quality, and expansion of the NIH full-length cDNA project: the Mammalian Gene Collection (MGC).</title>
        <authorList>
            <consortium name="The MGC Project Team"/>
        </authorList>
    </citation>
    <scope>NUCLEOTIDE SEQUENCE [LARGE SCALE MRNA]</scope>
    <source>
        <tissue>Testis</tissue>
    </source>
</reference>
<reference key="3">
    <citation type="journal article" date="2004" name="J. Biol. Chem.">
        <title>Characterization of two distinct dual specificity phosphatases encoded in alternative open reading frames of a single gene located on human chromosome 10q22.2.</title>
        <authorList>
            <person name="Chen H.-H."/>
            <person name="Luche R."/>
            <person name="Wei B."/>
            <person name="Tonks N.K."/>
        </authorList>
    </citation>
    <scope>TISSUE SPECIFICITY</scope>
    <scope>DEVELOPMENTAL STAGE</scope>
</reference>
<reference key="4">
    <citation type="journal article" date="2010" name="Cell">
        <title>A tissue-specific atlas of mouse protein phosphorylation and expression.</title>
        <authorList>
            <person name="Huttlin E.L."/>
            <person name="Jedrychowski M.P."/>
            <person name="Elias J.E."/>
            <person name="Goswami T."/>
            <person name="Rad R."/>
            <person name="Beausoleil S.A."/>
            <person name="Villen J."/>
            <person name="Haas W."/>
            <person name="Sowa M.E."/>
            <person name="Gygi S.P."/>
        </authorList>
    </citation>
    <scope>IDENTIFICATION BY MASS SPECTROMETRY [LARGE SCALE ANALYSIS]</scope>
    <source>
        <tissue>Testis</tissue>
    </source>
</reference>
<proteinExistence type="evidence at protein level"/>
<sequence>MDSLQKQELRRPKIHGAVQVSPYQPPTLASLQRLLWVRRTATLTHINEVWPNLFLGDAYAARDKGRLIQLGITHVVNVAAGKFQVDTGAKFYRGTPLEYYGIEADDNPFFDLSVHFLPVARYIRDALNIPRSRVLVHCAMGVSRSATIVLAFLMIFENMTLVDAIQTVQAHRDICPNSGFLRQLQVLDNRLRRETGRL</sequence>
<name>DS13B_MOUSE</name>
<evidence type="ECO:0000250" key="1">
    <source>
        <dbReference type="UniProtKB" id="Q9UII6"/>
    </source>
</evidence>
<evidence type="ECO:0000255" key="2">
    <source>
        <dbReference type="PROSITE-ProRule" id="PRU00160"/>
    </source>
</evidence>
<evidence type="ECO:0000255" key="3">
    <source>
        <dbReference type="PROSITE-ProRule" id="PRU10044"/>
    </source>
</evidence>
<evidence type="ECO:0000269" key="4">
    <source>
    </source>
</evidence>
<evidence type="ECO:0000269" key="5">
    <source>
    </source>
</evidence>
<evidence type="ECO:0000305" key="6"/>
<evidence type="ECO:0000312" key="7">
    <source>
        <dbReference type="MGI" id="MGI:1351599"/>
    </source>
</evidence>
<protein>
    <recommendedName>
        <fullName evidence="1">Dual specificity protein phosphatase 13B</fullName>
        <shortName>DUSP13B</shortName>
        <ecNumber evidence="4">3.1.3.16</ecNumber>
        <ecNumber evidence="4">3.1.3.48</ecNumber>
    </recommendedName>
    <alternativeName>
        <fullName>Dual specificity tyrosine phosphatase TS-DSP6</fullName>
    </alternativeName>
    <alternativeName>
        <fullName>Testis- and skeletal muscle-specific DSP</fullName>
    </alternativeName>
</protein>
<accession>Q9QYJ7</accession>
<accession>Q497R2</accession>
<keyword id="KW-0378">Hydrolase</keyword>
<keyword id="KW-0904">Protein phosphatase</keyword>
<keyword id="KW-1185">Reference proteome</keyword>
<dbReference type="EC" id="3.1.3.16" evidence="4"/>
<dbReference type="EC" id="3.1.3.48" evidence="4"/>
<dbReference type="EMBL" id="AB027003">
    <property type="protein sequence ID" value="BAA89411.1"/>
    <property type="molecule type" value="mRNA"/>
</dbReference>
<dbReference type="EMBL" id="AF237620">
    <property type="protein sequence ID" value="AAK15037.1"/>
    <property type="molecule type" value="mRNA"/>
</dbReference>
<dbReference type="EMBL" id="BC100421">
    <property type="protein sequence ID" value="AAI00422.1"/>
    <property type="molecule type" value="mRNA"/>
</dbReference>
<dbReference type="CCDS" id="CCDS88592.1"/>
<dbReference type="RefSeq" id="NP_001361006.1">
    <property type="nucleotide sequence ID" value="NM_001374077.1"/>
</dbReference>
<dbReference type="RefSeq" id="NP_001361007.1">
    <property type="nucleotide sequence ID" value="NM_001374078.1"/>
</dbReference>
<dbReference type="RefSeq" id="NP_001361008.1">
    <property type="nucleotide sequence ID" value="NM_001374079.1"/>
</dbReference>
<dbReference type="RefSeq" id="NP_038877.2">
    <property type="nucleotide sequence ID" value="NM_013849.3"/>
</dbReference>
<dbReference type="RefSeq" id="XP_006519139.1">
    <property type="nucleotide sequence ID" value="XM_006519076.3"/>
</dbReference>
<dbReference type="SMR" id="Q9QYJ7"/>
<dbReference type="BioGRID" id="205196">
    <property type="interactions" value="2"/>
</dbReference>
<dbReference type="FunCoup" id="Q9QYJ7">
    <property type="interactions" value="137"/>
</dbReference>
<dbReference type="STRING" id="10090.ENSMUSP00000113305"/>
<dbReference type="PhosphoSitePlus" id="Q9QYJ7"/>
<dbReference type="PaxDb" id="10090-ENSMUSP00000113305"/>
<dbReference type="Antibodypedia" id="15503">
    <property type="antibodies" value="256 antibodies from 27 providers"/>
</dbReference>
<dbReference type="DNASU" id="27389"/>
<dbReference type="Ensembl" id="ENSMUST00000120984.9">
    <property type="protein sequence ID" value="ENSMUSP00000113985.2"/>
    <property type="gene ID" value="ENSMUSG00000021768.17"/>
</dbReference>
<dbReference type="Ensembl" id="ENSMUST00000184703.8">
    <property type="protein sequence ID" value="ENSMUSP00000138972.2"/>
    <property type="gene ID" value="ENSMUSG00000021768.17"/>
</dbReference>
<dbReference type="GeneID" id="27389"/>
<dbReference type="KEGG" id="mmu:27389"/>
<dbReference type="UCSC" id="uc007slm.2">
    <property type="organism name" value="mouse"/>
</dbReference>
<dbReference type="AGR" id="MGI:1351599"/>
<dbReference type="CTD" id="51207"/>
<dbReference type="MGI" id="MGI:1351599">
    <property type="gene designation" value="Dusp13b"/>
</dbReference>
<dbReference type="VEuPathDB" id="HostDB:ENSMUSG00000021768"/>
<dbReference type="eggNOG" id="KOG1716">
    <property type="taxonomic scope" value="Eukaryota"/>
</dbReference>
<dbReference type="GeneTree" id="ENSGT00940000154628"/>
<dbReference type="HOGENOM" id="CLU_027074_4_0_1"/>
<dbReference type="InParanoid" id="Q9QYJ7"/>
<dbReference type="BioGRID-ORCS" id="27389">
    <property type="hits" value="2 hits in 61 CRISPR screens"/>
</dbReference>
<dbReference type="ChiTaRS" id="Dusp13">
    <property type="organism name" value="mouse"/>
</dbReference>
<dbReference type="PRO" id="PR:Q9QYJ7"/>
<dbReference type="Proteomes" id="UP000000589">
    <property type="component" value="Chromosome 14"/>
</dbReference>
<dbReference type="RNAct" id="Q9QYJ7">
    <property type="molecule type" value="protein"/>
</dbReference>
<dbReference type="Bgee" id="ENSMUSG00000021768">
    <property type="expression patterns" value="Expressed in spermatid and 48 other cell types or tissues"/>
</dbReference>
<dbReference type="ExpressionAtlas" id="Q9QYJ7">
    <property type="expression patterns" value="baseline and differential"/>
</dbReference>
<dbReference type="GO" id="GO:0004722">
    <property type="term" value="F:protein serine/threonine phosphatase activity"/>
    <property type="evidence" value="ECO:0007669"/>
    <property type="project" value="UniProtKB-EC"/>
</dbReference>
<dbReference type="GO" id="GO:0004725">
    <property type="term" value="F:protein tyrosine phosphatase activity"/>
    <property type="evidence" value="ECO:0007669"/>
    <property type="project" value="UniProtKB-EC"/>
</dbReference>
<dbReference type="GO" id="GO:0008138">
    <property type="term" value="F:protein tyrosine/serine/threonine phosphatase activity"/>
    <property type="evidence" value="ECO:0000314"/>
    <property type="project" value="MGI"/>
</dbReference>
<dbReference type="FunFam" id="3.90.190.10:FF:000059">
    <property type="entry name" value="Dual specificity phosphatase 13, isoform CRA_b"/>
    <property type="match status" value="1"/>
</dbReference>
<dbReference type="Gene3D" id="3.90.190.10">
    <property type="entry name" value="Protein tyrosine phosphatase superfamily"/>
    <property type="match status" value="1"/>
</dbReference>
<dbReference type="InterPro" id="IPR020405">
    <property type="entry name" value="Atypical_DUSP_subfamA"/>
</dbReference>
<dbReference type="InterPro" id="IPR000340">
    <property type="entry name" value="Dual-sp_phosphatase_cat-dom"/>
</dbReference>
<dbReference type="InterPro" id="IPR029021">
    <property type="entry name" value="Prot-tyrosine_phosphatase-like"/>
</dbReference>
<dbReference type="InterPro" id="IPR016130">
    <property type="entry name" value="Tyr_Pase_AS"/>
</dbReference>
<dbReference type="InterPro" id="IPR000387">
    <property type="entry name" value="Tyr_Pase_dom"/>
</dbReference>
<dbReference type="InterPro" id="IPR020422">
    <property type="entry name" value="TYR_PHOSPHATASE_DUAL_dom"/>
</dbReference>
<dbReference type="PANTHER" id="PTHR45682">
    <property type="entry name" value="AGAP008228-PA"/>
    <property type="match status" value="1"/>
</dbReference>
<dbReference type="PANTHER" id="PTHR45682:SF10">
    <property type="entry name" value="DUAL SPECIFICITY PROTEIN PHOSPHATASE 13 ISOFORM B"/>
    <property type="match status" value="1"/>
</dbReference>
<dbReference type="Pfam" id="PF00782">
    <property type="entry name" value="DSPc"/>
    <property type="match status" value="1"/>
</dbReference>
<dbReference type="PRINTS" id="PR01908">
    <property type="entry name" value="ADSPHPHTASE"/>
</dbReference>
<dbReference type="PRINTS" id="PR01909">
    <property type="entry name" value="ADSPHPHTASEA"/>
</dbReference>
<dbReference type="SMART" id="SM00195">
    <property type="entry name" value="DSPc"/>
    <property type="match status" value="1"/>
</dbReference>
<dbReference type="SUPFAM" id="SSF52799">
    <property type="entry name" value="(Phosphotyrosine protein) phosphatases II"/>
    <property type="match status" value="1"/>
</dbReference>
<dbReference type="PROSITE" id="PS00383">
    <property type="entry name" value="TYR_PHOSPHATASE_1"/>
    <property type="match status" value="1"/>
</dbReference>
<dbReference type="PROSITE" id="PS50056">
    <property type="entry name" value="TYR_PHOSPHATASE_2"/>
    <property type="match status" value="1"/>
</dbReference>
<dbReference type="PROSITE" id="PS50054">
    <property type="entry name" value="TYR_PHOSPHATASE_DUAL"/>
    <property type="match status" value="1"/>
</dbReference>
<comment type="function">
    <text evidence="1 4">Dual specificity phosphatase that dephosphorylates MAPK8/JNK and MAPK14/p38, but not MAPK1/ERK2, in vitro (By similarity). Exhibits intrinsic phosphatase activity towards both phospho-seryl/threonyl and -tyrosyl residues, with similar specific activities in vitro (PubMed:10585869).</text>
</comment>
<comment type="catalytic activity">
    <reaction evidence="3 4">
        <text>O-phospho-L-tyrosyl-[protein] + H2O = L-tyrosyl-[protein] + phosphate</text>
        <dbReference type="Rhea" id="RHEA:10684"/>
        <dbReference type="Rhea" id="RHEA-COMP:10136"/>
        <dbReference type="Rhea" id="RHEA-COMP:20101"/>
        <dbReference type="ChEBI" id="CHEBI:15377"/>
        <dbReference type="ChEBI" id="CHEBI:43474"/>
        <dbReference type="ChEBI" id="CHEBI:46858"/>
        <dbReference type="ChEBI" id="CHEBI:61978"/>
        <dbReference type="EC" id="3.1.3.48"/>
    </reaction>
</comment>
<comment type="catalytic activity">
    <reaction evidence="4">
        <text>O-phospho-L-seryl-[protein] + H2O = L-seryl-[protein] + phosphate</text>
        <dbReference type="Rhea" id="RHEA:20629"/>
        <dbReference type="Rhea" id="RHEA-COMP:9863"/>
        <dbReference type="Rhea" id="RHEA-COMP:11604"/>
        <dbReference type="ChEBI" id="CHEBI:15377"/>
        <dbReference type="ChEBI" id="CHEBI:29999"/>
        <dbReference type="ChEBI" id="CHEBI:43474"/>
        <dbReference type="ChEBI" id="CHEBI:83421"/>
        <dbReference type="EC" id="3.1.3.16"/>
    </reaction>
</comment>
<comment type="catalytic activity">
    <reaction evidence="4">
        <text>O-phospho-L-threonyl-[protein] + H2O = L-threonyl-[protein] + phosphate</text>
        <dbReference type="Rhea" id="RHEA:47004"/>
        <dbReference type="Rhea" id="RHEA-COMP:11060"/>
        <dbReference type="Rhea" id="RHEA-COMP:11605"/>
        <dbReference type="ChEBI" id="CHEBI:15377"/>
        <dbReference type="ChEBI" id="CHEBI:30013"/>
        <dbReference type="ChEBI" id="CHEBI:43474"/>
        <dbReference type="ChEBI" id="CHEBI:61977"/>
        <dbReference type="EC" id="3.1.3.16"/>
    </reaction>
</comment>
<comment type="tissue specificity">
    <text evidence="5">Most abundantly expressed in the testis.</text>
</comment>
<comment type="developmental stage">
    <text evidence="5">Not detectable in testis in the first 3 weeks of life. The expression markedly increases at approximately the 3rd week after birth and continues to increase gradually into adulthood.</text>
</comment>
<comment type="similarity">
    <text evidence="6">Belongs to the protein-tyrosine phosphatase family. Non-receptor class dual specificity subfamily.</text>
</comment>
<organism>
    <name type="scientific">Mus musculus</name>
    <name type="common">Mouse</name>
    <dbReference type="NCBI Taxonomy" id="10090"/>
    <lineage>
        <taxon>Eukaryota</taxon>
        <taxon>Metazoa</taxon>
        <taxon>Chordata</taxon>
        <taxon>Craniata</taxon>
        <taxon>Vertebrata</taxon>
        <taxon>Euteleostomi</taxon>
        <taxon>Mammalia</taxon>
        <taxon>Eutheria</taxon>
        <taxon>Euarchontoglires</taxon>
        <taxon>Glires</taxon>
        <taxon>Rodentia</taxon>
        <taxon>Myomorpha</taxon>
        <taxon>Muroidea</taxon>
        <taxon>Muridae</taxon>
        <taxon>Murinae</taxon>
        <taxon>Mus</taxon>
        <taxon>Mus</taxon>
    </lineage>
</organism>